<reference key="1">
    <citation type="journal article" date="2001" name="J. Biol. Chem.">
        <title>Biosynthesis of nucleotide-activated D-glycero-D-manno-heptose.</title>
        <authorList>
            <person name="Kneidinger B."/>
            <person name="Graninger M."/>
            <person name="Puchberger M."/>
            <person name="Kosma P."/>
            <person name="Messner P."/>
        </authorList>
    </citation>
    <scope>NUCLEOTIDE SEQUENCE [GENOMIC DNA]</scope>
    <scope>FUNCTION</scope>
    <scope>CATALYTIC ACTIVITY</scope>
    <scope>SUBSTRATE SPECIFICITY</scope>
    <scope>PATHWAY</scope>
    <source>
        <strain>ATCC 12990 / DSM 10155 / LMG 17166</strain>
    </source>
</reference>
<protein>
    <recommendedName>
        <fullName>D-glycero-alpha-D-manno-heptose 1-phosphate guanylyltransferase</fullName>
        <ecNumber>2.7.7.71</ecNumber>
    </recommendedName>
    <alternativeName>
        <fullName>D-alpha-D-heptose 1-phosphate guanylyltransferase</fullName>
    </alternativeName>
</protein>
<gene>
    <name type="primary">hddC</name>
    <name type="synonym">gmhD</name>
</gene>
<keyword id="KW-0119">Carbohydrate metabolism</keyword>
<keyword id="KW-0342">GTP-binding</keyword>
<keyword id="KW-0547">Nucleotide-binding</keyword>
<keyword id="KW-0548">Nucleotidyltransferase</keyword>
<keyword id="KW-0808">Transferase</keyword>
<dbReference type="EC" id="2.7.7.71"/>
<dbReference type="EMBL" id="AF324836">
    <property type="protein sequence ID" value="AAK27852.1"/>
    <property type="molecule type" value="Genomic_DNA"/>
</dbReference>
<dbReference type="SMR" id="Q9AGY6"/>
<dbReference type="KEGG" id="ag:AAK27852"/>
<dbReference type="BioCyc" id="MetaCyc:MONOMER-15576"/>
<dbReference type="BRENDA" id="2.7.7.71">
    <property type="organism ID" value="344"/>
</dbReference>
<dbReference type="UniPathway" id="UPA00543">
    <property type="reaction ID" value="UER00608"/>
</dbReference>
<dbReference type="UniPathway" id="UPA00977"/>
<dbReference type="GO" id="GO:0005525">
    <property type="term" value="F:GTP binding"/>
    <property type="evidence" value="ECO:0007669"/>
    <property type="project" value="UniProtKB-KW"/>
</dbReference>
<dbReference type="GO" id="GO:0016779">
    <property type="term" value="F:nucleotidyltransferase activity"/>
    <property type="evidence" value="ECO:0007669"/>
    <property type="project" value="UniProtKB-KW"/>
</dbReference>
<dbReference type="GO" id="GO:0009058">
    <property type="term" value="P:biosynthetic process"/>
    <property type="evidence" value="ECO:0007669"/>
    <property type="project" value="InterPro"/>
</dbReference>
<dbReference type="GO" id="GO:0045232">
    <property type="term" value="P:S-layer organization"/>
    <property type="evidence" value="ECO:0007669"/>
    <property type="project" value="UniProtKB-UniPathway"/>
</dbReference>
<dbReference type="CDD" id="cd06915">
    <property type="entry name" value="NTP_transferase_WcbM_like"/>
    <property type="match status" value="1"/>
</dbReference>
<dbReference type="Gene3D" id="3.90.550.10">
    <property type="entry name" value="Spore Coat Polysaccharide Biosynthesis Protein SpsA, Chain A"/>
    <property type="match status" value="1"/>
</dbReference>
<dbReference type="InterPro" id="IPR050486">
    <property type="entry name" value="Mannose-1P_guanyltransferase"/>
</dbReference>
<dbReference type="InterPro" id="IPR005835">
    <property type="entry name" value="NTP_transferase_dom"/>
</dbReference>
<dbReference type="InterPro" id="IPR029044">
    <property type="entry name" value="Nucleotide-diphossugar_trans"/>
</dbReference>
<dbReference type="PANTHER" id="PTHR22572">
    <property type="entry name" value="SUGAR-1-PHOSPHATE GUANYL TRANSFERASE"/>
    <property type="match status" value="1"/>
</dbReference>
<dbReference type="Pfam" id="PF00483">
    <property type="entry name" value="NTP_transferase"/>
    <property type="match status" value="1"/>
</dbReference>
<dbReference type="SUPFAM" id="SSF53448">
    <property type="entry name" value="Nucleotide-diphospho-sugar transferases"/>
    <property type="match status" value="1"/>
</dbReference>
<feature type="chain" id="PRO_0000424230" description="D-glycero-alpha-D-manno-heptose 1-phosphate guanylyltransferase">
    <location>
        <begin position="1"/>
        <end position="230"/>
    </location>
</feature>
<sequence>MEAIILVGGLGKRLRSVVSELPKPMAPIDNKPFLHYIFWYLNKQGIDQVILSTGYKHEMIETYFGNRYHGISINYSIEQEPLGTGGAIKKAFRKTTEENVVIINGDTLFLVDLRKMFERHISFKADLTLALKPMKEFERYGTVITRDSRVIAFKEKGYHSEGNINGGVYIANKAIFECESLSEKFSFEQDFLEKEFLQKKFYGFISDAYFIDIGIPDDYRKAQKELQHYI</sequence>
<comment type="function">
    <text evidence="1">Catalyzes the GDP transfer from GTP to D-glycero-alpha-D-manno-heptose 1-phosphate, yielding GDP-D-alpha-D-heptose. Cannot use ATP, CTP, dTTP or UTP as substrate.</text>
</comment>
<comment type="catalytic activity">
    <reaction evidence="1">
        <text>D-glycero-alpha-D-manno-heptose 1-phosphate + GTP + H(+) = GDP-D-glycero-alpha-D-manno-heptose + diphosphate</text>
        <dbReference type="Rhea" id="RHEA:27461"/>
        <dbReference type="ChEBI" id="CHEBI:15378"/>
        <dbReference type="ChEBI" id="CHEBI:33019"/>
        <dbReference type="ChEBI" id="CHEBI:37565"/>
        <dbReference type="ChEBI" id="CHEBI:59971"/>
        <dbReference type="ChEBI" id="CHEBI:61574"/>
        <dbReference type="EC" id="2.7.7.71"/>
    </reaction>
</comment>
<comment type="pathway">
    <text evidence="1">Nucleotide-sugar biosynthesis; GDP-D-glycero-alpha-D-manno-heptose biosynthesis; GDP-D-glycero-alpha-D-manno-heptose from D-glycero-alpha-D-manno-heptose 7-phosphate: step 3/3.</text>
</comment>
<comment type="pathway">
    <text evidence="1">Cell surface structure biogenesis; S-layer biogenesis.</text>
</comment>
<comment type="similarity">
    <text evidence="2">Belongs to the D-alpha-D-heptose-1-P guanylyltransferase family.</text>
</comment>
<accession>Q9AGY6</accession>
<organism>
    <name type="scientific">Aneurinibacillus thermoaerophilus</name>
    <dbReference type="NCBI Taxonomy" id="143495"/>
    <lineage>
        <taxon>Bacteria</taxon>
        <taxon>Bacillati</taxon>
        <taxon>Bacillota</taxon>
        <taxon>Bacilli</taxon>
        <taxon>Bacillales</taxon>
        <taxon>Paenibacillaceae</taxon>
        <taxon>Aneurinibacillus group</taxon>
        <taxon>Aneurinibacillus</taxon>
    </lineage>
</organism>
<proteinExistence type="evidence at protein level"/>
<evidence type="ECO:0000269" key="1">
    <source>
    </source>
</evidence>
<evidence type="ECO:0000305" key="2"/>
<name>HDDC_ANETH</name>